<sequence>MKDSFLFTSESVTEGHPDKMADQISDAVLDYIIERDQKAKVACETLVSNGFCMITGELKTSVYAPMQEIAREVVKKIGYTDALYGFDYRSAAVLNGIGEQSPDINQGVDREDGEIGAGDQGLMFGYACKETETLMPLPIHLAHQLAFALAQKRKDNTLPFLRPDGKSQVSVHYENNKPVSIDTIVISTQHSPEVSQKHLKEAVIEEIVYKVLPKEYLHDNIKFFVNPTGKFVIGGPQGDAGLTGRKIIVDTYGGSCPHGGGAFSGKDPSKVDRSAAYAARYVAKNLVASGVCDKATVQLAYAIGVIEPVSIYVNTHNTSKYSSVELEKCVKAVFKLTPKGIIESLDLLRPIYSLTSAYGHFGRELEEFTWEKTNKDEEIKAFFKR</sequence>
<evidence type="ECO:0000255" key="1">
    <source>
        <dbReference type="HAMAP-Rule" id="MF_00086"/>
    </source>
</evidence>
<comment type="function">
    <text evidence="1">Catalyzes the formation of S-adenosylmethionine (AdoMet) from methionine and ATP. The overall synthetic reaction is composed of two sequential steps, AdoMet formation and the subsequent tripolyphosphate hydrolysis which occurs prior to release of AdoMet from the enzyme.</text>
</comment>
<comment type="catalytic activity">
    <reaction evidence="1">
        <text>L-methionine + ATP + H2O = S-adenosyl-L-methionine + phosphate + diphosphate</text>
        <dbReference type="Rhea" id="RHEA:21080"/>
        <dbReference type="ChEBI" id="CHEBI:15377"/>
        <dbReference type="ChEBI" id="CHEBI:30616"/>
        <dbReference type="ChEBI" id="CHEBI:33019"/>
        <dbReference type="ChEBI" id="CHEBI:43474"/>
        <dbReference type="ChEBI" id="CHEBI:57844"/>
        <dbReference type="ChEBI" id="CHEBI:59789"/>
        <dbReference type="EC" id="2.5.1.6"/>
    </reaction>
</comment>
<comment type="cofactor">
    <cofactor evidence="1">
        <name>Mg(2+)</name>
        <dbReference type="ChEBI" id="CHEBI:18420"/>
    </cofactor>
    <text evidence="1">Binds 2 divalent ions per subunit.</text>
</comment>
<comment type="cofactor">
    <cofactor evidence="1">
        <name>K(+)</name>
        <dbReference type="ChEBI" id="CHEBI:29103"/>
    </cofactor>
    <text evidence="1">Binds 1 potassium ion per subunit.</text>
</comment>
<comment type="pathway">
    <text evidence="1">Amino-acid biosynthesis; S-adenosyl-L-methionine biosynthesis; S-adenosyl-L-methionine from L-methionine: step 1/1.</text>
</comment>
<comment type="subunit">
    <text evidence="1">Homotetramer; dimer of dimers.</text>
</comment>
<comment type="subcellular location">
    <subcellularLocation>
        <location evidence="1">Cytoplasm</location>
    </subcellularLocation>
</comment>
<comment type="similarity">
    <text evidence="1">Belongs to the AdoMet synthase family.</text>
</comment>
<dbReference type="EC" id="2.5.1.6" evidence="1"/>
<dbReference type="EMBL" id="CP000241">
    <property type="protein sequence ID" value="ABF84258.1"/>
    <property type="molecule type" value="Genomic_DNA"/>
</dbReference>
<dbReference type="RefSeq" id="WP_000655124.1">
    <property type="nucleotide sequence ID" value="NC_008086.1"/>
</dbReference>
<dbReference type="SMR" id="Q1CUW4"/>
<dbReference type="KEGG" id="hpa:HPAG1_0191"/>
<dbReference type="HOGENOM" id="CLU_041802_1_1_7"/>
<dbReference type="UniPathway" id="UPA00315">
    <property type="reaction ID" value="UER00080"/>
</dbReference>
<dbReference type="GO" id="GO:0005737">
    <property type="term" value="C:cytoplasm"/>
    <property type="evidence" value="ECO:0007669"/>
    <property type="project" value="UniProtKB-SubCell"/>
</dbReference>
<dbReference type="GO" id="GO:0005524">
    <property type="term" value="F:ATP binding"/>
    <property type="evidence" value="ECO:0007669"/>
    <property type="project" value="UniProtKB-UniRule"/>
</dbReference>
<dbReference type="GO" id="GO:0000287">
    <property type="term" value="F:magnesium ion binding"/>
    <property type="evidence" value="ECO:0007669"/>
    <property type="project" value="UniProtKB-UniRule"/>
</dbReference>
<dbReference type="GO" id="GO:0004478">
    <property type="term" value="F:methionine adenosyltransferase activity"/>
    <property type="evidence" value="ECO:0007669"/>
    <property type="project" value="UniProtKB-UniRule"/>
</dbReference>
<dbReference type="GO" id="GO:0006730">
    <property type="term" value="P:one-carbon metabolic process"/>
    <property type="evidence" value="ECO:0007669"/>
    <property type="project" value="UniProtKB-KW"/>
</dbReference>
<dbReference type="GO" id="GO:0006556">
    <property type="term" value="P:S-adenosylmethionine biosynthetic process"/>
    <property type="evidence" value="ECO:0007669"/>
    <property type="project" value="UniProtKB-UniRule"/>
</dbReference>
<dbReference type="CDD" id="cd18079">
    <property type="entry name" value="S-AdoMet_synt"/>
    <property type="match status" value="1"/>
</dbReference>
<dbReference type="FunFam" id="3.30.300.10:FF:000003">
    <property type="entry name" value="S-adenosylmethionine synthase"/>
    <property type="match status" value="1"/>
</dbReference>
<dbReference type="Gene3D" id="3.30.300.10">
    <property type="match status" value="3"/>
</dbReference>
<dbReference type="HAMAP" id="MF_00086">
    <property type="entry name" value="S_AdoMet_synth1"/>
    <property type="match status" value="1"/>
</dbReference>
<dbReference type="InterPro" id="IPR022631">
    <property type="entry name" value="ADOMET_SYNTHASE_CS"/>
</dbReference>
<dbReference type="InterPro" id="IPR022630">
    <property type="entry name" value="S-AdoMet_synt_C"/>
</dbReference>
<dbReference type="InterPro" id="IPR022629">
    <property type="entry name" value="S-AdoMet_synt_central"/>
</dbReference>
<dbReference type="InterPro" id="IPR022628">
    <property type="entry name" value="S-AdoMet_synt_N"/>
</dbReference>
<dbReference type="InterPro" id="IPR002133">
    <property type="entry name" value="S-AdoMet_synthetase"/>
</dbReference>
<dbReference type="InterPro" id="IPR022636">
    <property type="entry name" value="S-AdoMet_synthetase_sfam"/>
</dbReference>
<dbReference type="NCBIfam" id="TIGR01034">
    <property type="entry name" value="metK"/>
    <property type="match status" value="1"/>
</dbReference>
<dbReference type="PANTHER" id="PTHR11964">
    <property type="entry name" value="S-ADENOSYLMETHIONINE SYNTHETASE"/>
    <property type="match status" value="1"/>
</dbReference>
<dbReference type="Pfam" id="PF02773">
    <property type="entry name" value="S-AdoMet_synt_C"/>
    <property type="match status" value="1"/>
</dbReference>
<dbReference type="Pfam" id="PF02772">
    <property type="entry name" value="S-AdoMet_synt_M"/>
    <property type="match status" value="1"/>
</dbReference>
<dbReference type="Pfam" id="PF00438">
    <property type="entry name" value="S-AdoMet_synt_N"/>
    <property type="match status" value="1"/>
</dbReference>
<dbReference type="PIRSF" id="PIRSF000497">
    <property type="entry name" value="MAT"/>
    <property type="match status" value="1"/>
</dbReference>
<dbReference type="SUPFAM" id="SSF55973">
    <property type="entry name" value="S-adenosylmethionine synthetase"/>
    <property type="match status" value="3"/>
</dbReference>
<dbReference type="PROSITE" id="PS00376">
    <property type="entry name" value="ADOMET_SYNTHASE_1"/>
    <property type="match status" value="1"/>
</dbReference>
<dbReference type="PROSITE" id="PS00377">
    <property type="entry name" value="ADOMET_SYNTHASE_2"/>
    <property type="match status" value="1"/>
</dbReference>
<organism>
    <name type="scientific">Helicobacter pylori (strain HPAG1)</name>
    <dbReference type="NCBI Taxonomy" id="357544"/>
    <lineage>
        <taxon>Bacteria</taxon>
        <taxon>Pseudomonadati</taxon>
        <taxon>Campylobacterota</taxon>
        <taxon>Epsilonproteobacteria</taxon>
        <taxon>Campylobacterales</taxon>
        <taxon>Helicobacteraceae</taxon>
        <taxon>Helicobacter</taxon>
    </lineage>
</organism>
<accession>Q1CUW4</accession>
<protein>
    <recommendedName>
        <fullName evidence="1">S-adenosylmethionine synthase</fullName>
        <shortName evidence="1">AdoMet synthase</shortName>
        <ecNumber evidence="1">2.5.1.6</ecNumber>
    </recommendedName>
    <alternativeName>
        <fullName evidence="1">MAT</fullName>
    </alternativeName>
    <alternativeName>
        <fullName evidence="1">Methionine adenosyltransferase</fullName>
    </alternativeName>
</protein>
<reference key="1">
    <citation type="journal article" date="2006" name="Proc. Natl. Acad. Sci. U.S.A.">
        <title>The complete genome sequence of a chronic atrophic gastritis Helicobacter pylori strain: evolution during disease progression.</title>
        <authorList>
            <person name="Oh J.D."/>
            <person name="Kling-Baeckhed H."/>
            <person name="Giannakis M."/>
            <person name="Xu J."/>
            <person name="Fulton R.S."/>
            <person name="Fulton L.A."/>
            <person name="Cordum H.S."/>
            <person name="Wang C."/>
            <person name="Elliott G."/>
            <person name="Edwards J."/>
            <person name="Mardis E.R."/>
            <person name="Engstrand L.G."/>
            <person name="Gordon J.I."/>
        </authorList>
    </citation>
    <scope>NUCLEOTIDE SEQUENCE [LARGE SCALE GENOMIC DNA]</scope>
    <source>
        <strain>HPAG1</strain>
    </source>
</reference>
<feature type="chain" id="PRO_0000302923" description="S-adenosylmethionine synthase">
    <location>
        <begin position="1"/>
        <end position="385"/>
    </location>
</feature>
<feature type="region of interest" description="Flexible loop" evidence="1">
    <location>
        <begin position="100"/>
        <end position="110"/>
    </location>
</feature>
<feature type="binding site" description="in other chain" evidence="1">
    <location>
        <position position="16"/>
    </location>
    <ligand>
        <name>ATP</name>
        <dbReference type="ChEBI" id="CHEBI:30616"/>
        <note>ligand shared between two neighboring subunits</note>
    </ligand>
</feature>
<feature type="binding site" evidence="1">
    <location>
        <position position="18"/>
    </location>
    <ligand>
        <name>Mg(2+)</name>
        <dbReference type="ChEBI" id="CHEBI:18420"/>
    </ligand>
</feature>
<feature type="binding site" evidence="1">
    <location>
        <position position="44"/>
    </location>
    <ligand>
        <name>K(+)</name>
        <dbReference type="ChEBI" id="CHEBI:29103"/>
    </ligand>
</feature>
<feature type="binding site" description="in other chain" evidence="1">
    <location>
        <position position="57"/>
    </location>
    <ligand>
        <name>L-methionine</name>
        <dbReference type="ChEBI" id="CHEBI:57844"/>
        <note>ligand shared between two neighboring subunits</note>
    </ligand>
</feature>
<feature type="binding site" description="in other chain" evidence="1">
    <location>
        <position position="100"/>
    </location>
    <ligand>
        <name>L-methionine</name>
        <dbReference type="ChEBI" id="CHEBI:57844"/>
        <note>ligand shared between two neighboring subunits</note>
    </ligand>
</feature>
<feature type="binding site" description="in other chain" evidence="1">
    <location>
        <begin position="164"/>
        <end position="166"/>
    </location>
    <ligand>
        <name>ATP</name>
        <dbReference type="ChEBI" id="CHEBI:30616"/>
        <note>ligand shared between two neighboring subunits</note>
    </ligand>
</feature>
<feature type="binding site" description="in other chain" evidence="1">
    <location>
        <begin position="230"/>
        <end position="231"/>
    </location>
    <ligand>
        <name>ATP</name>
        <dbReference type="ChEBI" id="CHEBI:30616"/>
        <note>ligand shared between two neighboring subunits</note>
    </ligand>
</feature>
<feature type="binding site" evidence="1">
    <location>
        <position position="239"/>
    </location>
    <ligand>
        <name>ATP</name>
        <dbReference type="ChEBI" id="CHEBI:30616"/>
        <note>ligand shared between two neighboring subunits</note>
    </ligand>
</feature>
<feature type="binding site" evidence="1">
    <location>
        <position position="239"/>
    </location>
    <ligand>
        <name>L-methionine</name>
        <dbReference type="ChEBI" id="CHEBI:57844"/>
        <note>ligand shared between two neighboring subunits</note>
    </ligand>
</feature>
<feature type="binding site" description="in other chain" evidence="1">
    <location>
        <begin position="245"/>
        <end position="246"/>
    </location>
    <ligand>
        <name>ATP</name>
        <dbReference type="ChEBI" id="CHEBI:30616"/>
        <note>ligand shared between two neighboring subunits</note>
    </ligand>
</feature>
<feature type="binding site" evidence="1">
    <location>
        <position position="262"/>
    </location>
    <ligand>
        <name>ATP</name>
        <dbReference type="ChEBI" id="CHEBI:30616"/>
        <note>ligand shared between two neighboring subunits</note>
    </ligand>
</feature>
<feature type="binding site" evidence="1">
    <location>
        <position position="266"/>
    </location>
    <ligand>
        <name>ATP</name>
        <dbReference type="ChEBI" id="CHEBI:30616"/>
        <note>ligand shared between two neighboring subunits</note>
    </ligand>
</feature>
<feature type="binding site" description="in other chain" evidence="1">
    <location>
        <position position="270"/>
    </location>
    <ligand>
        <name>L-methionine</name>
        <dbReference type="ChEBI" id="CHEBI:57844"/>
        <note>ligand shared between two neighboring subunits</note>
    </ligand>
</feature>
<name>METK_HELPH</name>
<keyword id="KW-0067">ATP-binding</keyword>
<keyword id="KW-0963">Cytoplasm</keyword>
<keyword id="KW-0460">Magnesium</keyword>
<keyword id="KW-0479">Metal-binding</keyword>
<keyword id="KW-0547">Nucleotide-binding</keyword>
<keyword id="KW-0554">One-carbon metabolism</keyword>
<keyword id="KW-0630">Potassium</keyword>
<keyword id="KW-0808">Transferase</keyword>
<proteinExistence type="inferred from homology"/>
<gene>
    <name evidence="1" type="primary">metK</name>
    <name type="ordered locus">HPAG1_0191</name>
</gene>